<proteinExistence type="evidence at protein level"/>
<evidence type="ECO:0000250" key="1">
    <source>
        <dbReference type="UniProtKB" id="P10902"/>
    </source>
</evidence>
<evidence type="ECO:0000255" key="2"/>
<evidence type="ECO:0000269" key="3">
    <source>
    </source>
</evidence>
<evidence type="ECO:0000269" key="4">
    <source>
    </source>
</evidence>
<evidence type="ECO:0000269" key="5">
    <source>
    </source>
</evidence>
<evidence type="ECO:0000303" key="6">
    <source>
    </source>
</evidence>
<evidence type="ECO:0000303" key="7">
    <source>
    </source>
</evidence>
<evidence type="ECO:0000305" key="8"/>
<evidence type="ECO:0000305" key="9">
    <source>
    </source>
</evidence>
<evidence type="ECO:0000312" key="10">
    <source>
        <dbReference type="Araport" id="AT5G14760"/>
    </source>
</evidence>
<evidence type="ECO:0000312" key="11">
    <source>
        <dbReference type="EMBL" id="CAC01875.1"/>
    </source>
</evidence>
<comment type="function">
    <text evidence="3 5">Catalyzes the oxidation of L-aspartate to iminoaspartate. Can complement nadB-deficient E.coli mutant. Plays a role in stomatal immunity.</text>
</comment>
<comment type="catalytic activity">
    <reaction evidence="3">
        <text>L-aspartate + O2 = iminosuccinate + H2O2</text>
        <dbReference type="Rhea" id="RHEA:25876"/>
        <dbReference type="ChEBI" id="CHEBI:15379"/>
        <dbReference type="ChEBI" id="CHEBI:16240"/>
        <dbReference type="ChEBI" id="CHEBI:29991"/>
        <dbReference type="ChEBI" id="CHEBI:77875"/>
        <dbReference type="EC" id="1.4.3.16"/>
    </reaction>
</comment>
<comment type="cofactor">
    <cofactor evidence="1">
        <name>FAD</name>
        <dbReference type="ChEBI" id="CHEBI:57692"/>
    </cofactor>
    <text evidence="1">Binds 1 FAD per subunit.</text>
</comment>
<comment type="pathway">
    <text evidence="3">Cofactor biosynthesis; NAD(+) biosynthesis; iminoaspartate from L-aspartate (oxidase route): step 1/1.</text>
</comment>
<comment type="subunit">
    <text evidence="4">Interacts in vitro with QS (PubMed:18978034).</text>
</comment>
<comment type="subcellular location">
    <subcellularLocation>
        <location evidence="3">Plastid</location>
        <location evidence="3">Chloroplast</location>
    </subcellularLocation>
</comment>
<comment type="disruption phenotype">
    <text evidence="3">Embryonic lethality when homozygous.</text>
</comment>
<comment type="miscellaneous">
    <text evidence="9">The viable mutant fin4 (T-DNA insertion in the promoter) is impaired in the RBOHD-dependent pathogen-associated molecular pattern (PAMP)-induced reactive oxygen species (ROS) burst and stomatal closure.</text>
</comment>
<comment type="similarity">
    <text evidence="8">Belongs to the FAD-dependent oxidoreductase 2 family. NadB subfamily.</text>
</comment>
<comment type="sequence caution" evidence="8">
    <conflict type="erroneous gene model prediction">
        <sequence resource="EMBL-CDS" id="CAC01875"/>
    </conflict>
</comment>
<reference key="1">
    <citation type="journal article" date="2000" name="Nature">
        <title>Sequence and analysis of chromosome 5 of the plant Arabidopsis thaliana.</title>
        <authorList>
            <person name="Tabata S."/>
            <person name="Kaneko T."/>
            <person name="Nakamura Y."/>
            <person name="Kotani H."/>
            <person name="Kato T."/>
            <person name="Asamizu E."/>
            <person name="Miyajima N."/>
            <person name="Sasamoto S."/>
            <person name="Kimura T."/>
            <person name="Hosouchi T."/>
            <person name="Kawashima K."/>
            <person name="Kohara M."/>
            <person name="Matsumoto M."/>
            <person name="Matsuno A."/>
            <person name="Muraki A."/>
            <person name="Nakayama S."/>
            <person name="Nakazaki N."/>
            <person name="Naruo K."/>
            <person name="Okumura S."/>
            <person name="Shinpo S."/>
            <person name="Takeuchi C."/>
            <person name="Wada T."/>
            <person name="Watanabe A."/>
            <person name="Yamada M."/>
            <person name="Yasuda M."/>
            <person name="Sato S."/>
            <person name="de la Bastide M."/>
            <person name="Huang E."/>
            <person name="Spiegel L."/>
            <person name="Gnoj L."/>
            <person name="O'Shaughnessy A."/>
            <person name="Preston R."/>
            <person name="Habermann K."/>
            <person name="Murray J."/>
            <person name="Johnson D."/>
            <person name="Rohlfing T."/>
            <person name="Nelson J."/>
            <person name="Stoneking T."/>
            <person name="Pepin K."/>
            <person name="Spieth J."/>
            <person name="Sekhon M."/>
            <person name="Armstrong J."/>
            <person name="Becker M."/>
            <person name="Belter E."/>
            <person name="Cordum H."/>
            <person name="Cordes M."/>
            <person name="Courtney L."/>
            <person name="Courtney W."/>
            <person name="Dante M."/>
            <person name="Du H."/>
            <person name="Edwards J."/>
            <person name="Fryman J."/>
            <person name="Haakensen B."/>
            <person name="Lamar E."/>
            <person name="Latreille P."/>
            <person name="Leonard S."/>
            <person name="Meyer R."/>
            <person name="Mulvaney E."/>
            <person name="Ozersky P."/>
            <person name="Riley A."/>
            <person name="Strowmatt C."/>
            <person name="Wagner-McPherson C."/>
            <person name="Wollam A."/>
            <person name="Yoakum M."/>
            <person name="Bell M."/>
            <person name="Dedhia N."/>
            <person name="Parnell L."/>
            <person name="Shah R."/>
            <person name="Rodriguez M."/>
            <person name="Hoon See L."/>
            <person name="Vil D."/>
            <person name="Baker J."/>
            <person name="Kirchoff K."/>
            <person name="Toth K."/>
            <person name="King L."/>
            <person name="Bahret A."/>
            <person name="Miller B."/>
            <person name="Marra M.A."/>
            <person name="Martienssen R."/>
            <person name="McCombie W.R."/>
            <person name="Wilson R.K."/>
            <person name="Murphy G."/>
            <person name="Bancroft I."/>
            <person name="Volckaert G."/>
            <person name="Wambutt R."/>
            <person name="Duesterhoeft A."/>
            <person name="Stiekema W."/>
            <person name="Pohl T."/>
            <person name="Entian K.-D."/>
            <person name="Terryn N."/>
            <person name="Hartley N."/>
            <person name="Bent E."/>
            <person name="Johnson S."/>
            <person name="Langham S.-A."/>
            <person name="McCullagh B."/>
            <person name="Robben J."/>
            <person name="Grymonprez B."/>
            <person name="Zimmermann W."/>
            <person name="Ramsperger U."/>
            <person name="Wedler H."/>
            <person name="Balke K."/>
            <person name="Wedler E."/>
            <person name="Peters S."/>
            <person name="van Staveren M."/>
            <person name="Dirkse W."/>
            <person name="Mooijman P."/>
            <person name="Klein Lankhorst R."/>
            <person name="Weitzenegger T."/>
            <person name="Bothe G."/>
            <person name="Rose M."/>
            <person name="Hauf J."/>
            <person name="Berneiser S."/>
            <person name="Hempel S."/>
            <person name="Feldpausch M."/>
            <person name="Lamberth S."/>
            <person name="Villarroel R."/>
            <person name="Gielen J."/>
            <person name="Ardiles W."/>
            <person name="Bents O."/>
            <person name="Lemcke K."/>
            <person name="Kolesov G."/>
            <person name="Mayer K.F.X."/>
            <person name="Rudd S."/>
            <person name="Schoof H."/>
            <person name="Schueller C."/>
            <person name="Zaccaria P."/>
            <person name="Mewes H.-W."/>
            <person name="Bevan M."/>
            <person name="Fransz P.F."/>
        </authorList>
    </citation>
    <scope>NUCLEOTIDE SEQUENCE [LARGE SCALE GENOMIC DNA]</scope>
    <source>
        <strain>cv. Columbia</strain>
    </source>
</reference>
<reference key="2">
    <citation type="journal article" date="2017" name="Plant J.">
        <title>Araport11: a complete reannotation of the Arabidopsis thaliana reference genome.</title>
        <authorList>
            <person name="Cheng C.Y."/>
            <person name="Krishnakumar V."/>
            <person name="Chan A.P."/>
            <person name="Thibaud-Nissen F."/>
            <person name="Schobel S."/>
            <person name="Town C.D."/>
        </authorList>
    </citation>
    <scope>GENOME REANNOTATION</scope>
    <source>
        <strain>cv. Columbia</strain>
    </source>
</reference>
<reference key="3">
    <citation type="journal article" date="2003" name="Science">
        <title>Empirical analysis of transcriptional activity in the Arabidopsis genome.</title>
        <authorList>
            <person name="Yamada K."/>
            <person name="Lim J."/>
            <person name="Dale J.M."/>
            <person name="Chen H."/>
            <person name="Shinn P."/>
            <person name="Palm C.J."/>
            <person name="Southwick A.M."/>
            <person name="Wu H.C."/>
            <person name="Kim C.J."/>
            <person name="Nguyen M."/>
            <person name="Pham P.K."/>
            <person name="Cheuk R.F."/>
            <person name="Karlin-Newmann G."/>
            <person name="Liu S.X."/>
            <person name="Lam B."/>
            <person name="Sakano H."/>
            <person name="Wu T."/>
            <person name="Yu G."/>
            <person name="Miranda M."/>
            <person name="Quach H.L."/>
            <person name="Tripp M."/>
            <person name="Chang C.H."/>
            <person name="Lee J.M."/>
            <person name="Toriumi M.J."/>
            <person name="Chan M.M."/>
            <person name="Tang C.C."/>
            <person name="Onodera C.S."/>
            <person name="Deng J.M."/>
            <person name="Akiyama K."/>
            <person name="Ansari Y."/>
            <person name="Arakawa T."/>
            <person name="Banh J."/>
            <person name="Banno F."/>
            <person name="Bowser L."/>
            <person name="Brooks S.Y."/>
            <person name="Carninci P."/>
            <person name="Chao Q."/>
            <person name="Choy N."/>
            <person name="Enju A."/>
            <person name="Goldsmith A.D."/>
            <person name="Gurjal M."/>
            <person name="Hansen N.F."/>
            <person name="Hayashizaki Y."/>
            <person name="Johnson-Hopson C."/>
            <person name="Hsuan V.W."/>
            <person name="Iida K."/>
            <person name="Karnes M."/>
            <person name="Khan S."/>
            <person name="Koesema E."/>
            <person name="Ishida J."/>
            <person name="Jiang P.X."/>
            <person name="Jones T."/>
            <person name="Kawai J."/>
            <person name="Kamiya A."/>
            <person name="Meyers C."/>
            <person name="Nakajima M."/>
            <person name="Narusaka M."/>
            <person name="Seki M."/>
            <person name="Sakurai T."/>
            <person name="Satou M."/>
            <person name="Tamse R."/>
            <person name="Vaysberg M."/>
            <person name="Wallender E.K."/>
            <person name="Wong C."/>
            <person name="Yamamura Y."/>
            <person name="Yuan S."/>
            <person name="Shinozaki K."/>
            <person name="Davis R.W."/>
            <person name="Theologis A."/>
            <person name="Ecker J.R."/>
        </authorList>
    </citation>
    <scope>NUCLEOTIDE SEQUENCE [LARGE SCALE MRNA]</scope>
    <source>
        <strain>cv. Columbia</strain>
    </source>
</reference>
<reference key="4">
    <citation type="journal article" date="2006" name="Plant Physiol.">
        <title>Early steps in the biosynthesis of NAD in Arabidopsis start with aspartate and occur in the plastid.</title>
        <authorList>
            <person name="Katoh A."/>
            <person name="Uenohara K."/>
            <person name="Akita M."/>
            <person name="Hashimoto T."/>
        </authorList>
    </citation>
    <scope>FUNCTION</scope>
    <scope>SUBCELLULAR LOCATION</scope>
    <scope>DISRUPTION PHENOTYPE</scope>
    <scope>CATALYTIC ACTIVITY</scope>
    <scope>PATHWAY</scope>
</reference>
<reference key="5">
    <citation type="journal article" date="2008" name="Plant Cell">
        <title>The Arabidopsis onset of leaf death5 mutation of quinolinate synthase affects nicotinamide adenine dinucleotide biosynthesis and causes early ageing.</title>
        <authorList>
            <person name="Schippers J.H."/>
            <person name="Nunes-Nesi A."/>
            <person name="Apetrei R."/>
            <person name="Hille J."/>
            <person name="Fernie A.R."/>
            <person name="Dijkwel P.P."/>
        </authorList>
    </citation>
    <scope>INTERACTION WITH QS</scope>
    <source>
        <strain>cv. Landsberg erecta</strain>
    </source>
</reference>
<reference key="6">
    <citation type="journal article" date="2012" name="Plant Physiol.">
        <title>Aspartate oxidase plays an important role in Arabidopsis stomatal immunity.</title>
        <authorList>
            <person name="Macho A.P."/>
            <person name="Boutrot F."/>
            <person name="Rathjen J.P."/>
            <person name="Zipfel C."/>
        </authorList>
    </citation>
    <scope>FUNCTION</scope>
</reference>
<sequence>MAAHVSTGNIHNFYLAGQVYRGQAFSWSSASTFMANPFKEPSWSSGVFKALKAERCGCYSRGISPISETSKPIRAVSVSSSTKYYDFTVIGSGVAGLRYALEVAKQGTVAVITKDEPHESNTNYAQGGVSAVLCPLDSVESHMRDTMVAGAHLCDEETVRVVCTEGPERIRELIAMGASFDHGEDGNLHLAREGGHSHCRIVHAADMTGREIERALLEAVLNDPNISVFKHHFAIDLLTSQDGLNTVCHGVDTLNIKTNEVVRFISKVTLLASGGAGHIYPSTTNPLVATGDGMAMAHRAQAVISNMEFVQFHPTALADEGLPIKLQTARENAFLITEAVRGDGGILYNLGMERFMPVYDERAELAPRDVVARSIDDQLKKRNEKYVLLDISHKPREKILAHFPNIASECLKHGLDITRQPIPVVPAAHYMCGGVRAGLQGETNVLGLFVAGEVACTGLHGANRLASNSLLEALVFARRAVQPSTELMKRTRLDVCASEKWTRPVVATARLLGDEVIAKIIALTKEVRRELQEVMWKYVGIVRSTIRLTTAERKIAELEAKWETFLFEHGWEQTVVALEACEMRNLFCCAKLVVSSALARHESRGLHYMTDFPFVEESKRIPTIILPSSPTTASWSSRRLQNISSSSLIDC</sequence>
<gene>
    <name evidence="6 7" type="primary">AO</name>
    <name evidence="7" type="synonym">FIN4</name>
    <name evidence="10" type="ordered locus">At5g14760</name>
    <name evidence="11" type="ORF">T9L3.60</name>
</gene>
<organism>
    <name type="scientific">Arabidopsis thaliana</name>
    <name type="common">Mouse-ear cress</name>
    <dbReference type="NCBI Taxonomy" id="3702"/>
    <lineage>
        <taxon>Eukaryota</taxon>
        <taxon>Viridiplantae</taxon>
        <taxon>Streptophyta</taxon>
        <taxon>Embryophyta</taxon>
        <taxon>Tracheophyta</taxon>
        <taxon>Spermatophyta</taxon>
        <taxon>Magnoliopsida</taxon>
        <taxon>eudicotyledons</taxon>
        <taxon>Gunneridae</taxon>
        <taxon>Pentapetalae</taxon>
        <taxon>rosids</taxon>
        <taxon>malvids</taxon>
        <taxon>Brassicales</taxon>
        <taxon>Brassicaceae</taxon>
        <taxon>Camelineae</taxon>
        <taxon>Arabidopsis</taxon>
    </lineage>
</organism>
<dbReference type="EC" id="1.4.3.16" evidence="3"/>
<dbReference type="EMBL" id="AL391149">
    <property type="protein sequence ID" value="CAC01875.1"/>
    <property type="status" value="ALT_SEQ"/>
    <property type="molecule type" value="Genomic_DNA"/>
</dbReference>
<dbReference type="EMBL" id="CP002688">
    <property type="protein sequence ID" value="AED92074.1"/>
    <property type="molecule type" value="Genomic_DNA"/>
</dbReference>
<dbReference type="EMBL" id="AY045626">
    <property type="protein sequence ID" value="AAK73984.1"/>
    <property type="molecule type" value="mRNA"/>
</dbReference>
<dbReference type="EMBL" id="BT001009">
    <property type="protein sequence ID" value="AAN46763.1"/>
    <property type="molecule type" value="mRNA"/>
</dbReference>
<dbReference type="PIR" id="T51421">
    <property type="entry name" value="T51421"/>
</dbReference>
<dbReference type="RefSeq" id="NP_568304.1">
    <property type="nucleotide sequence ID" value="NM_121480.4"/>
</dbReference>
<dbReference type="SMR" id="Q94AY1"/>
<dbReference type="BioGRID" id="16605">
    <property type="interactions" value="42"/>
</dbReference>
<dbReference type="FunCoup" id="Q94AY1">
    <property type="interactions" value="288"/>
</dbReference>
<dbReference type="IntAct" id="Q94AY1">
    <property type="interactions" value="4"/>
</dbReference>
<dbReference type="STRING" id="3702.Q94AY1"/>
<dbReference type="PaxDb" id="3702-AT5G14760.1"/>
<dbReference type="ProteomicsDB" id="251019"/>
<dbReference type="EnsemblPlants" id="AT5G14760.1">
    <property type="protein sequence ID" value="AT5G14760.1"/>
    <property type="gene ID" value="AT5G14760"/>
</dbReference>
<dbReference type="GeneID" id="831328"/>
<dbReference type="Gramene" id="AT5G14760.1">
    <property type="protein sequence ID" value="AT5G14760.1"/>
    <property type="gene ID" value="AT5G14760"/>
</dbReference>
<dbReference type="KEGG" id="ath:AT5G14760"/>
<dbReference type="Araport" id="AT5G14760"/>
<dbReference type="TAIR" id="AT5G14760">
    <property type="gene designation" value="AO"/>
</dbReference>
<dbReference type="eggNOG" id="KOG2403">
    <property type="taxonomic scope" value="Eukaryota"/>
</dbReference>
<dbReference type="HOGENOM" id="CLU_014312_3_0_1"/>
<dbReference type="InParanoid" id="Q94AY1"/>
<dbReference type="OMA" id="HCVQWLI"/>
<dbReference type="OrthoDB" id="71672at2759"/>
<dbReference type="PhylomeDB" id="Q94AY1"/>
<dbReference type="BioCyc" id="ARA:AT5G14760-MONOMER"/>
<dbReference type="UniPathway" id="UPA00253">
    <property type="reaction ID" value="UER00326"/>
</dbReference>
<dbReference type="PRO" id="PR:Q94AY1"/>
<dbReference type="Proteomes" id="UP000006548">
    <property type="component" value="Chromosome 5"/>
</dbReference>
<dbReference type="ExpressionAtlas" id="Q94AY1">
    <property type="expression patterns" value="baseline and differential"/>
</dbReference>
<dbReference type="GO" id="GO:0009507">
    <property type="term" value="C:chloroplast"/>
    <property type="evidence" value="ECO:0000314"/>
    <property type="project" value="TAIR"/>
</dbReference>
<dbReference type="GO" id="GO:0008734">
    <property type="term" value="F:L-aspartate oxidase activity"/>
    <property type="evidence" value="ECO:0007669"/>
    <property type="project" value="UniProtKB-EC"/>
</dbReference>
<dbReference type="GO" id="GO:0000166">
    <property type="term" value="F:nucleotide binding"/>
    <property type="evidence" value="ECO:0007669"/>
    <property type="project" value="UniProtKB-KW"/>
</dbReference>
<dbReference type="GO" id="GO:0009435">
    <property type="term" value="P:NAD biosynthetic process"/>
    <property type="evidence" value="ECO:0000315"/>
    <property type="project" value="TAIR"/>
</dbReference>
<dbReference type="FunFam" id="3.90.700.10:FF:000002">
    <property type="entry name" value="L-aspartate oxidase"/>
    <property type="match status" value="1"/>
</dbReference>
<dbReference type="Gene3D" id="3.50.50.60">
    <property type="entry name" value="FAD/NAD(P)-binding domain"/>
    <property type="match status" value="1"/>
</dbReference>
<dbReference type="Gene3D" id="1.20.58.100">
    <property type="entry name" value="Fumarate reductase/succinate dehydrogenase flavoprotein-like, C-terminal domain"/>
    <property type="match status" value="1"/>
</dbReference>
<dbReference type="Gene3D" id="3.90.700.10">
    <property type="entry name" value="Succinate dehydrogenase/fumarate reductase flavoprotein, catalytic domain"/>
    <property type="match status" value="1"/>
</dbReference>
<dbReference type="InterPro" id="IPR003953">
    <property type="entry name" value="FAD-dep_OxRdtase_2_FAD-bd"/>
</dbReference>
<dbReference type="InterPro" id="IPR036188">
    <property type="entry name" value="FAD/NAD-bd_sf"/>
</dbReference>
<dbReference type="InterPro" id="IPR037099">
    <property type="entry name" value="Fum_R/Succ_DH_flav-like_C_sf"/>
</dbReference>
<dbReference type="InterPro" id="IPR015939">
    <property type="entry name" value="Fum_Rdtase/Succ_DH_flav-like_C"/>
</dbReference>
<dbReference type="InterPro" id="IPR005288">
    <property type="entry name" value="NadB"/>
</dbReference>
<dbReference type="InterPro" id="IPR027477">
    <property type="entry name" value="Succ_DH/fumarate_Rdtase_cat_sf"/>
</dbReference>
<dbReference type="NCBIfam" id="TIGR00551">
    <property type="entry name" value="nadB"/>
    <property type="match status" value="1"/>
</dbReference>
<dbReference type="PANTHER" id="PTHR42716">
    <property type="entry name" value="L-ASPARTATE OXIDASE"/>
    <property type="match status" value="1"/>
</dbReference>
<dbReference type="PANTHER" id="PTHR42716:SF2">
    <property type="entry name" value="L-ASPARTATE OXIDASE, CHLOROPLASTIC"/>
    <property type="match status" value="1"/>
</dbReference>
<dbReference type="Pfam" id="PF00890">
    <property type="entry name" value="FAD_binding_2"/>
    <property type="match status" value="1"/>
</dbReference>
<dbReference type="Pfam" id="PF02910">
    <property type="entry name" value="Succ_DH_flav_C"/>
    <property type="match status" value="1"/>
</dbReference>
<dbReference type="SUPFAM" id="SSF51905">
    <property type="entry name" value="FAD/NAD(P)-binding domain"/>
    <property type="match status" value="1"/>
</dbReference>
<dbReference type="SUPFAM" id="SSF46977">
    <property type="entry name" value="Succinate dehydrogenase/fumarate reductase flavoprotein C-terminal domain"/>
    <property type="match status" value="1"/>
</dbReference>
<dbReference type="SUPFAM" id="SSF56425">
    <property type="entry name" value="Succinate dehydrogenase/fumarate reductase flavoprotein, catalytic domain"/>
    <property type="match status" value="1"/>
</dbReference>
<feature type="transit peptide" description="Chloroplast" evidence="2">
    <location>
        <begin position="1"/>
        <end position="74"/>
    </location>
</feature>
<feature type="chain" id="PRO_0000423478" description="L-aspartate oxidase, chloroplastic">
    <location>
        <begin position="75"/>
        <end position="651"/>
    </location>
</feature>
<feature type="active site" description="Proton donor/acceptor" evidence="1">
    <location>
        <position position="368"/>
    </location>
</feature>
<feature type="binding site" evidence="1">
    <location>
        <begin position="92"/>
        <end position="95"/>
    </location>
    <ligand>
        <name>FAD</name>
        <dbReference type="ChEBI" id="CHEBI:57692"/>
    </ligand>
</feature>
<feature type="binding site" evidence="1">
    <location>
        <position position="114"/>
    </location>
    <ligand>
        <name>FAD</name>
        <dbReference type="ChEBI" id="CHEBI:57692"/>
    </ligand>
</feature>
<feature type="binding site" evidence="1">
    <location>
        <begin position="121"/>
        <end position="128"/>
    </location>
    <ligand>
        <name>FAD</name>
        <dbReference type="ChEBI" id="CHEBI:57692"/>
    </ligand>
</feature>
<feature type="binding site" evidence="1">
    <location>
        <position position="292"/>
    </location>
    <ligand>
        <name>FAD</name>
        <dbReference type="ChEBI" id="CHEBI:57692"/>
    </ligand>
</feature>
<feature type="binding site" evidence="1">
    <location>
        <position position="453"/>
    </location>
    <ligand>
        <name>FAD</name>
        <dbReference type="ChEBI" id="CHEBI:57692"/>
    </ligand>
</feature>
<feature type="binding site" evidence="1">
    <location>
        <begin position="469"/>
        <end position="470"/>
    </location>
    <ligand>
        <name>FAD</name>
        <dbReference type="ChEBI" id="CHEBI:57692"/>
    </ligand>
</feature>
<feature type="site" description="Important in orienting the L-aspartate substrate" evidence="1">
    <location>
        <position position="193"/>
    </location>
</feature>
<protein>
    <recommendedName>
        <fullName evidence="6 7">L-aspartate oxidase, chloroplastic</fullName>
        <ecNumber evidence="3">1.4.3.16</ecNumber>
    </recommendedName>
    <alternativeName>
        <fullName evidence="7">Protein FLAGELLIN-INSENSITIVE 4</fullName>
    </alternativeName>
</protein>
<accession>Q94AY1</accession>
<accession>Q9LER1</accession>
<name>NADB_ARATH</name>
<keyword id="KW-0150">Chloroplast</keyword>
<keyword id="KW-0274">FAD</keyword>
<keyword id="KW-0285">Flavoprotein</keyword>
<keyword id="KW-0547">Nucleotide-binding</keyword>
<keyword id="KW-0560">Oxidoreductase</keyword>
<keyword id="KW-0934">Plastid</keyword>
<keyword id="KW-0662">Pyridine nucleotide biosynthesis</keyword>
<keyword id="KW-1185">Reference proteome</keyword>
<keyword id="KW-0809">Transit peptide</keyword>